<protein>
    <recommendedName>
        <fullName evidence="2">Small ribosomal subunit protein eS30</fullName>
    </recommendedName>
    <alternativeName>
        <fullName>40S ribosomal protein S30</fullName>
    </alternativeName>
</protein>
<proteinExistence type="inferred from homology"/>
<comment type="similarity">
    <text evidence="2">Belongs to the eukaryotic ribosomal protein eS30 family.</text>
</comment>
<comment type="caution">
    <text evidence="2">The gene for this protein is duplicated in strains AX3 and AX4. These strains contain a duplication of a segment of 750 kb of chromosome 2 compared to the corresponding sequence in strain AX2.</text>
</comment>
<accession>Q556Y1</accession>
<accession>Q86JT6</accession>
<dbReference type="EMBL" id="AAFI02000009">
    <property type="protein sequence ID" value="EAL70813.1"/>
    <property type="molecule type" value="Genomic_DNA"/>
</dbReference>
<dbReference type="EMBL" id="AAFI02000011">
    <property type="protein sequence ID" value="EAL70562.1"/>
    <property type="molecule type" value="Genomic_DNA"/>
</dbReference>
<dbReference type="RefSeq" id="XP_644488.1">
    <property type="nucleotide sequence ID" value="XM_639396.1"/>
</dbReference>
<dbReference type="RefSeq" id="XP_644762.1">
    <property type="nucleotide sequence ID" value="XM_639670.1"/>
</dbReference>
<dbReference type="SMR" id="Q556Y1"/>
<dbReference type="FunCoup" id="Q556Y1">
    <property type="interactions" value="159"/>
</dbReference>
<dbReference type="STRING" id="44689.Q556Y1"/>
<dbReference type="PaxDb" id="44689-DDB0231068"/>
<dbReference type="EnsemblProtists" id="EAL70562">
    <property type="protein sequence ID" value="EAL70562"/>
    <property type="gene ID" value="DDB_G0273743"/>
</dbReference>
<dbReference type="EnsemblProtists" id="EAL70813">
    <property type="protein sequence ID" value="EAL70813"/>
    <property type="gene ID" value="DDB_G0273191"/>
</dbReference>
<dbReference type="GeneID" id="8618864"/>
<dbReference type="GeneID" id="8619112"/>
<dbReference type="KEGG" id="ddi:DDB_G0273191"/>
<dbReference type="KEGG" id="ddi:DDB_G0273743"/>
<dbReference type="dictyBase" id="DDB_G0273191">
    <property type="gene designation" value="rps30-1"/>
</dbReference>
<dbReference type="dictyBase" id="DDB_G0273743">
    <property type="gene designation" value="rps30-2"/>
</dbReference>
<dbReference type="VEuPathDB" id="AmoebaDB:DDB_G0273743"/>
<dbReference type="eggNOG" id="ENOG502SZXH">
    <property type="taxonomic scope" value="Eukaryota"/>
</dbReference>
<dbReference type="HOGENOM" id="CLU_010412_5_1_1"/>
<dbReference type="InParanoid" id="Q556Y1"/>
<dbReference type="OMA" id="YNTQNVP"/>
<dbReference type="PhylomeDB" id="Q556Y1"/>
<dbReference type="PRO" id="PR:Q556Y1"/>
<dbReference type="Proteomes" id="UP000002195">
    <property type="component" value="Chromosome 2"/>
</dbReference>
<dbReference type="GO" id="GO:0022627">
    <property type="term" value="C:cytosolic small ribosomal subunit"/>
    <property type="evidence" value="ECO:0000318"/>
    <property type="project" value="GO_Central"/>
</dbReference>
<dbReference type="GO" id="GO:0015935">
    <property type="term" value="C:small ribosomal subunit"/>
    <property type="evidence" value="ECO:0000250"/>
    <property type="project" value="dictyBase"/>
</dbReference>
<dbReference type="GO" id="GO:0003735">
    <property type="term" value="F:structural constituent of ribosome"/>
    <property type="evidence" value="ECO:0000250"/>
    <property type="project" value="dictyBase"/>
</dbReference>
<dbReference type="GO" id="GO:0006412">
    <property type="term" value="P:translation"/>
    <property type="evidence" value="ECO:0007669"/>
    <property type="project" value="InterPro"/>
</dbReference>
<dbReference type="InterPro" id="IPR006846">
    <property type="entry name" value="Ribosomal_eS30"/>
</dbReference>
<dbReference type="PANTHER" id="PTHR12650">
    <property type="entry name" value="40S RIBOSOMAL PROTEIN S30/UBIQUITIN-LIKE PROTEIN FUBI"/>
    <property type="match status" value="1"/>
</dbReference>
<dbReference type="PANTHER" id="PTHR12650:SF15">
    <property type="entry name" value="RIBOSOMAL PROTEIN S30, ISOFORM A"/>
    <property type="match status" value="1"/>
</dbReference>
<dbReference type="Pfam" id="PF04758">
    <property type="entry name" value="Ribosomal_S30"/>
    <property type="match status" value="1"/>
</dbReference>
<organism>
    <name type="scientific">Dictyostelium discoideum</name>
    <name type="common">Social amoeba</name>
    <dbReference type="NCBI Taxonomy" id="44689"/>
    <lineage>
        <taxon>Eukaryota</taxon>
        <taxon>Amoebozoa</taxon>
        <taxon>Evosea</taxon>
        <taxon>Eumycetozoa</taxon>
        <taxon>Dictyostelia</taxon>
        <taxon>Dictyosteliales</taxon>
        <taxon>Dictyosteliaceae</taxon>
        <taxon>Dictyostelium</taxon>
    </lineage>
</organism>
<keyword id="KW-1185">Reference proteome</keyword>
<keyword id="KW-0687">Ribonucleoprotein</keyword>
<keyword id="KW-0689">Ribosomal protein</keyword>
<feature type="chain" id="PRO_0000326197" description="Small ribosomal subunit protein eS30">
    <location>
        <begin position="1"/>
        <end position="66"/>
    </location>
</feature>
<feature type="region of interest" description="Disordered" evidence="1">
    <location>
        <begin position="1"/>
        <end position="35"/>
    </location>
</feature>
<name>RS30_DICDI</name>
<reference key="1">
    <citation type="journal article" date="2002" name="Nature">
        <title>Sequence and analysis of chromosome 2 of Dictyostelium discoideum.</title>
        <authorList>
            <person name="Gloeckner G."/>
            <person name="Eichinger L."/>
            <person name="Szafranski K."/>
            <person name="Pachebat J.A."/>
            <person name="Bankier A.T."/>
            <person name="Dear P.H."/>
            <person name="Lehmann R."/>
            <person name="Baumgart C."/>
            <person name="Parra G."/>
            <person name="Abril J.F."/>
            <person name="Guigo R."/>
            <person name="Kumpf K."/>
            <person name="Tunggal B."/>
            <person name="Cox E.C."/>
            <person name="Quail M.A."/>
            <person name="Platzer M."/>
            <person name="Rosenthal A."/>
            <person name="Noegel A.A."/>
        </authorList>
    </citation>
    <scope>NUCLEOTIDE SEQUENCE [LARGE SCALE GENOMIC DNA]</scope>
    <source>
        <strain>AX4</strain>
    </source>
</reference>
<reference key="2">
    <citation type="journal article" date="2005" name="Nature">
        <title>The genome of the social amoeba Dictyostelium discoideum.</title>
        <authorList>
            <person name="Eichinger L."/>
            <person name="Pachebat J.A."/>
            <person name="Gloeckner G."/>
            <person name="Rajandream M.A."/>
            <person name="Sucgang R."/>
            <person name="Berriman M."/>
            <person name="Song J."/>
            <person name="Olsen R."/>
            <person name="Szafranski K."/>
            <person name="Xu Q."/>
            <person name="Tunggal B."/>
            <person name="Kummerfeld S."/>
            <person name="Madera M."/>
            <person name="Konfortov B.A."/>
            <person name="Rivero F."/>
            <person name="Bankier A.T."/>
            <person name="Lehmann R."/>
            <person name="Hamlin N."/>
            <person name="Davies R."/>
            <person name="Gaudet P."/>
            <person name="Fey P."/>
            <person name="Pilcher K."/>
            <person name="Chen G."/>
            <person name="Saunders D."/>
            <person name="Sodergren E.J."/>
            <person name="Davis P."/>
            <person name="Kerhornou A."/>
            <person name="Nie X."/>
            <person name="Hall N."/>
            <person name="Anjard C."/>
            <person name="Hemphill L."/>
            <person name="Bason N."/>
            <person name="Farbrother P."/>
            <person name="Desany B."/>
            <person name="Just E."/>
            <person name="Morio T."/>
            <person name="Rost R."/>
            <person name="Churcher C.M."/>
            <person name="Cooper J."/>
            <person name="Haydock S."/>
            <person name="van Driessche N."/>
            <person name="Cronin A."/>
            <person name="Goodhead I."/>
            <person name="Muzny D.M."/>
            <person name="Mourier T."/>
            <person name="Pain A."/>
            <person name="Lu M."/>
            <person name="Harper D."/>
            <person name="Lindsay R."/>
            <person name="Hauser H."/>
            <person name="James K.D."/>
            <person name="Quiles M."/>
            <person name="Madan Babu M."/>
            <person name="Saito T."/>
            <person name="Buchrieser C."/>
            <person name="Wardroper A."/>
            <person name="Felder M."/>
            <person name="Thangavelu M."/>
            <person name="Johnson D."/>
            <person name="Knights A."/>
            <person name="Loulseged H."/>
            <person name="Mungall K.L."/>
            <person name="Oliver K."/>
            <person name="Price C."/>
            <person name="Quail M.A."/>
            <person name="Urushihara H."/>
            <person name="Hernandez J."/>
            <person name="Rabbinowitsch E."/>
            <person name="Steffen D."/>
            <person name="Sanders M."/>
            <person name="Ma J."/>
            <person name="Kohara Y."/>
            <person name="Sharp S."/>
            <person name="Simmonds M.N."/>
            <person name="Spiegler S."/>
            <person name="Tivey A."/>
            <person name="Sugano S."/>
            <person name="White B."/>
            <person name="Walker D."/>
            <person name="Woodward J.R."/>
            <person name="Winckler T."/>
            <person name="Tanaka Y."/>
            <person name="Shaulsky G."/>
            <person name="Schleicher M."/>
            <person name="Weinstock G.M."/>
            <person name="Rosenthal A."/>
            <person name="Cox E.C."/>
            <person name="Chisholm R.L."/>
            <person name="Gibbs R.A."/>
            <person name="Loomis W.F."/>
            <person name="Platzer M."/>
            <person name="Kay R.R."/>
            <person name="Williams J.G."/>
            <person name="Dear P.H."/>
            <person name="Noegel A.A."/>
            <person name="Barrell B.G."/>
            <person name="Kuspa A."/>
        </authorList>
    </citation>
    <scope>NUCLEOTIDE SEQUENCE [LARGE SCALE GENOMIC DNA]</scope>
    <source>
        <strain>AX4</strain>
    </source>
</reference>
<evidence type="ECO:0000256" key="1">
    <source>
        <dbReference type="SAM" id="MobiDB-lite"/>
    </source>
</evidence>
<evidence type="ECO:0000305" key="2"/>
<sequence length="66" mass="7290">MGKVHGGLNRAGKVRNATPKKDKEEKRKPKVGRAKKRMIFNRRNVAAVAGFGKKKGYNTQNVPTVA</sequence>
<gene>
    <name type="primary">rps30-1</name>
    <name type="ORF">DDB_G0273191</name>
</gene>
<gene>
    <name type="primary">rps30-2</name>
    <name type="ORF">DDB_G0273743</name>
</gene>